<organism>
    <name type="scientific">Staphylococcus aureus (strain Mu50 / ATCC 700699)</name>
    <dbReference type="NCBI Taxonomy" id="158878"/>
    <lineage>
        <taxon>Bacteria</taxon>
        <taxon>Bacillati</taxon>
        <taxon>Bacillota</taxon>
        <taxon>Bacilli</taxon>
        <taxon>Bacillales</taxon>
        <taxon>Staphylococcaceae</taxon>
        <taxon>Staphylococcus</taxon>
    </lineage>
</organism>
<proteinExistence type="inferred from homology"/>
<accession>P60645</accession>
<accession>Q99R94</accession>
<dbReference type="EMBL" id="BA000017">
    <property type="protein sequence ID" value="BAB58703.1"/>
    <property type="molecule type" value="Genomic_DNA"/>
</dbReference>
<dbReference type="RefSeq" id="WP_000549734.1">
    <property type="nucleotide sequence ID" value="NC_002758.2"/>
</dbReference>
<dbReference type="SMR" id="P60645"/>
<dbReference type="KEGG" id="sav:SAV2541"/>
<dbReference type="HOGENOM" id="CLU_113736_2_1_9"/>
<dbReference type="PhylomeDB" id="P60645"/>
<dbReference type="Proteomes" id="UP000002481">
    <property type="component" value="Chromosome"/>
</dbReference>
<dbReference type="GO" id="GO:0005886">
    <property type="term" value="C:plasma membrane"/>
    <property type="evidence" value="ECO:0007669"/>
    <property type="project" value="UniProtKB-SubCell"/>
</dbReference>
<dbReference type="GO" id="GO:0019835">
    <property type="term" value="P:cytolysis"/>
    <property type="evidence" value="ECO:0007669"/>
    <property type="project" value="UniProtKB-UniRule"/>
</dbReference>
<dbReference type="GO" id="GO:0031640">
    <property type="term" value="P:killing of cells of another organism"/>
    <property type="evidence" value="ECO:0007669"/>
    <property type="project" value="UniProtKB-KW"/>
</dbReference>
<dbReference type="GO" id="GO:0012501">
    <property type="term" value="P:programmed cell death"/>
    <property type="evidence" value="ECO:0007669"/>
    <property type="project" value="UniProtKB-UniRule"/>
</dbReference>
<dbReference type="HAMAP" id="MF_01143">
    <property type="entry name" value="CidA"/>
    <property type="match status" value="1"/>
</dbReference>
<dbReference type="InterPro" id="IPR023760">
    <property type="entry name" value="Holin-like_CidA"/>
</dbReference>
<dbReference type="InterPro" id="IPR005538">
    <property type="entry name" value="LrgA/CidA"/>
</dbReference>
<dbReference type="PANTHER" id="PTHR33931:SF2">
    <property type="entry name" value="HOLIN-LIKE PROTEIN CIDA"/>
    <property type="match status" value="1"/>
</dbReference>
<dbReference type="PANTHER" id="PTHR33931">
    <property type="entry name" value="HOLIN-LIKE PROTEIN CIDA-RELATED"/>
    <property type="match status" value="1"/>
</dbReference>
<dbReference type="Pfam" id="PF03788">
    <property type="entry name" value="LrgA"/>
    <property type="match status" value="1"/>
</dbReference>
<feature type="chain" id="PRO_0000213179" description="Holin-like protein CidA">
    <location>
        <begin position="1"/>
        <end position="131"/>
    </location>
</feature>
<feature type="transmembrane region" description="Helical" evidence="1">
    <location>
        <begin position="7"/>
        <end position="25"/>
    </location>
</feature>
<feature type="transmembrane region" description="Helical" evidence="1">
    <location>
        <begin position="30"/>
        <end position="49"/>
    </location>
</feature>
<feature type="transmembrane region" description="Helical" evidence="1">
    <location>
        <begin position="62"/>
        <end position="82"/>
    </location>
</feature>
<feature type="transmembrane region" description="Helical" evidence="1">
    <location>
        <begin position="92"/>
        <end position="114"/>
    </location>
</feature>
<protein>
    <recommendedName>
        <fullName evidence="1">Holin-like protein CidA</fullName>
    </recommendedName>
</protein>
<keyword id="KW-1003">Cell membrane</keyword>
<keyword id="KW-0204">Cytolysis</keyword>
<keyword id="KW-0472">Membrane</keyword>
<keyword id="KW-0812">Transmembrane</keyword>
<keyword id="KW-1133">Transmembrane helix</keyword>
<name>CIDA_STAAM</name>
<evidence type="ECO:0000255" key="1">
    <source>
        <dbReference type="HAMAP-Rule" id="MF_01143"/>
    </source>
</evidence>
<reference key="1">
    <citation type="journal article" date="2001" name="Lancet">
        <title>Whole genome sequencing of meticillin-resistant Staphylococcus aureus.</title>
        <authorList>
            <person name="Kuroda M."/>
            <person name="Ohta T."/>
            <person name="Uchiyama I."/>
            <person name="Baba T."/>
            <person name="Yuzawa H."/>
            <person name="Kobayashi I."/>
            <person name="Cui L."/>
            <person name="Oguchi A."/>
            <person name="Aoki K."/>
            <person name="Nagai Y."/>
            <person name="Lian J.-Q."/>
            <person name="Ito T."/>
            <person name="Kanamori M."/>
            <person name="Matsumaru H."/>
            <person name="Maruyama A."/>
            <person name="Murakami H."/>
            <person name="Hosoyama A."/>
            <person name="Mizutani-Ui Y."/>
            <person name="Takahashi N.K."/>
            <person name="Sawano T."/>
            <person name="Inoue R."/>
            <person name="Kaito C."/>
            <person name="Sekimizu K."/>
            <person name="Hirakawa H."/>
            <person name="Kuhara S."/>
            <person name="Goto S."/>
            <person name="Yabuzaki J."/>
            <person name="Kanehisa M."/>
            <person name="Yamashita A."/>
            <person name="Oshima K."/>
            <person name="Furuya K."/>
            <person name="Yoshino C."/>
            <person name="Shiba T."/>
            <person name="Hattori M."/>
            <person name="Ogasawara N."/>
            <person name="Hayashi H."/>
            <person name="Hiramatsu K."/>
        </authorList>
    </citation>
    <scope>NUCLEOTIDE SEQUENCE [LARGE SCALE GENOMIC DNA]</scope>
    <source>
        <strain>Mu50 / ATCC 700699</strain>
    </source>
</reference>
<sequence>MHKVQLIIKLLLQLGIIIVITYIGTEIQKIFHLPLAGSIVGLFLFYLLLQFKIVPLTWVEDGANFLLKTMVFFFIPSVVGIMDVASEITLNYILFFAVIIIGTCIVALSSGYIAEKMSVKHKHRKGVDAYE</sequence>
<gene>
    <name evidence="1" type="primary">cidA</name>
    <name type="ordered locus">SAV2541</name>
</gene>
<comment type="function">
    <text evidence="1">Increases the activity of extracellular murein hydrolases possibly by mediating their export via hole formation. Inhibited by the antiholin-like proteins LrgAB. In an unstressed cell, the LrgAB products probably inhibit the function of the CidAB proteins. When a cell is stressed by the addition of antibiotics or by other factors in the environment, the CidAB proteins possibly oligomerize within the bacterial cell membrane, creating lesions that disrupt the proton motive force, which in turn results in loss of cell viability. These lesions are also hypothesized to regulate the subsequent cell lysis by either allowing the murein hydrolases access to the cell wall substrate and/or regulating their activity by a possible change in the cell wall pH that results from loss of membrane potential.</text>
</comment>
<comment type="subcellular location">
    <subcellularLocation>
        <location evidence="1">Cell membrane</location>
        <topology evidence="1">Multi-pass membrane protein</topology>
    </subcellularLocation>
</comment>
<comment type="similarity">
    <text evidence="1">Belongs to the CidA/LrgA family. CidA subfamily.</text>
</comment>